<reference key="1">
    <citation type="submission" date="2009-11" db="EMBL/GenBank/DDBJ databases">
        <authorList>
            <consortium name="Porcine genome sequencing project"/>
        </authorList>
    </citation>
    <scope>NUCLEOTIDE SEQUENCE [LARGE SCALE GENOMIC DNA]</scope>
</reference>
<reference key="2">
    <citation type="journal article" date="1990" name="Proc. Natl. Acad. Sci. U.S.A.">
        <title>Secretin: structure of the precursor and tissue distribution of the mRNA.</title>
        <authorList>
            <person name="Kopin A.S."/>
            <person name="Wheeler M.B."/>
            <person name="Leiter A.B."/>
        </authorList>
    </citation>
    <scope>NUCLEOTIDE SEQUENCE [MRNA] OF 4-134</scope>
</reference>
<reference key="3">
    <citation type="journal article" date="1995" name="Proc. Natl. Acad. Sci. U.S.A.">
        <title>Two alternative processing pathways for a preprohormone: a bioactive form of secretin.</title>
        <authorList>
            <person name="Bonetto V."/>
            <person name="Joernvall H."/>
            <person name="Mutt V."/>
            <person name="Sillard R."/>
        </authorList>
    </citation>
    <scope>PROTEIN SEQUENCE OF 4-59 (PRECURSOR PROTEIN)</scope>
    <scope>SUBCELLULAR LOCATION</scope>
    <source>
        <tissue>Intestine</tissue>
    </source>
</reference>
<reference key="4">
    <citation type="journal article" date="1970" name="Eur. J. Biochem.">
        <title>Structure of porcine secretin. The amino acid sequence.</title>
        <authorList>
            <person name="Mutt V."/>
            <person name="Jorpes J.E."/>
            <person name="Magnusson S."/>
        </authorList>
    </citation>
    <scope>PROTEIN SEQUENCE OF 33-59</scope>
    <scope>AMIDATION AT VAL-59</scope>
</reference>
<reference key="5">
    <citation type="journal article" date="1990" name="Proc. Natl. Acad. Sci. U.S.A.">
        <title>Processing of prosecretin: isolation of a secretin precursor from porcine intestine.</title>
        <authorList>
            <person name="Gafvelin G."/>
            <person name="Joernvall H."/>
            <person name="Mutt V."/>
        </authorList>
    </citation>
    <scope>PROTEIN SEQUENCE OF 33-62 AND 95-134 (PRECURSOR PROTEIN)</scope>
</reference>
<reference key="6">
    <citation type="journal article" date="1966" name="Chem. Ind.">
        <title>Synthesis of a heptacosapeptide amide with the hormonal activity of secretin.</title>
        <authorList>
            <person name="Bodanszky M."/>
            <person name="Ondetti M.A."/>
            <person name="Levine S.D."/>
            <person name="Narayanan V.L."/>
            <person name="Von Saltza M."/>
            <person name="Sheehan J.T."/>
            <person name="Williams N.J."/>
            <person name="Sabo E.F."/>
        </authorList>
    </citation>
    <scope>SYNTHESIS OF 33-134</scope>
</reference>
<reference key="7">
    <citation type="journal article" date="1988" name="Eur. J. Biochem.">
        <title>Determination of the backbone conformation of secretin by restrained molecular dynamics on the basis of interproton distance data.</title>
        <authorList>
            <person name="Clore G.M."/>
            <person name="Nilges M."/>
            <person name="Bruenger A."/>
            <person name="Gronenborn A.M."/>
        </authorList>
    </citation>
    <scope>STRUCTURE BY NMR OF SECRETIN</scope>
</reference>
<reference key="8">
    <citation type="journal article" date="1987" name="FEBS Lett.">
        <title>A 1H-NMR study of the solution conformation of secretin. Resonance assignment and secondary structure.</title>
        <authorList>
            <person name="Gronenborn A.M."/>
            <person name="Bovermann G."/>
            <person name="Clore G.M."/>
        </authorList>
    </citation>
    <scope>STRUCTURE BY NMR OF SECRETIN</scope>
</reference>
<proteinExistence type="evidence at protein level"/>
<dbReference type="EMBL" id="AEMK02000006">
    <property type="status" value="NOT_ANNOTATED_CDS"/>
    <property type="molecule type" value="Genomic_DNA"/>
</dbReference>
<dbReference type="EMBL" id="M31496">
    <property type="protein sequence ID" value="AAA31121.1"/>
    <property type="molecule type" value="mRNA"/>
</dbReference>
<dbReference type="PIR" id="B35094">
    <property type="entry name" value="SEPG"/>
</dbReference>
<dbReference type="RefSeq" id="XP_003122439.1">
    <property type="nucleotide sequence ID" value="XM_003122391.4"/>
</dbReference>
<dbReference type="BMRB" id="P63298"/>
<dbReference type="SMR" id="P63298"/>
<dbReference type="FunCoup" id="P63298">
    <property type="interactions" value="4"/>
</dbReference>
<dbReference type="STRING" id="9823.ENSSSCP00000034067"/>
<dbReference type="Ensembl" id="ENSSSCT00000055951.3">
    <property type="protein sequence ID" value="ENSSSCP00000034067.3"/>
    <property type="gene ID" value="ENSSSCG00000040951.3"/>
</dbReference>
<dbReference type="Ensembl" id="ENSSSCT00085032366">
    <property type="protein sequence ID" value="ENSSSCP00085022443"/>
    <property type="gene ID" value="ENSSSCG00085016993"/>
</dbReference>
<dbReference type="Ensembl" id="ENSSSCT00105049224">
    <property type="protein sequence ID" value="ENSSSCP00105034686"/>
    <property type="gene ID" value="ENSSSCG00105025890"/>
</dbReference>
<dbReference type="Ensembl" id="ENSSSCT00110063890">
    <property type="protein sequence ID" value="ENSSSCP00110044709"/>
    <property type="gene ID" value="ENSSSCG00110033547"/>
</dbReference>
<dbReference type="Ensembl" id="ENSSSCT00130073419">
    <property type="protein sequence ID" value="ENSSSCP00130052898"/>
    <property type="gene ID" value="ENSSSCG00130037594"/>
</dbReference>
<dbReference type="GeneID" id="397464"/>
<dbReference type="KEGG" id="ssc:397464"/>
<dbReference type="CTD" id="6343"/>
<dbReference type="VGNC" id="VGNC:98304">
    <property type="gene designation" value="SCT"/>
</dbReference>
<dbReference type="GeneTree" id="ENSGT00390000002624"/>
<dbReference type="InParanoid" id="P63298"/>
<dbReference type="OrthoDB" id="9417777at2759"/>
<dbReference type="Reactome" id="R-SSC-418555">
    <property type="pathway name" value="G alpha (s) signalling events"/>
</dbReference>
<dbReference type="Reactome" id="R-SSC-420092">
    <property type="pathway name" value="Glucagon-type ligand receptors"/>
</dbReference>
<dbReference type="Proteomes" id="UP000008227">
    <property type="component" value="Chromosome 2"/>
</dbReference>
<dbReference type="Proteomes" id="UP000314985">
    <property type="component" value="Unplaced"/>
</dbReference>
<dbReference type="Proteomes" id="UP000694570">
    <property type="component" value="Unplaced"/>
</dbReference>
<dbReference type="Proteomes" id="UP000694571">
    <property type="component" value="Unplaced"/>
</dbReference>
<dbReference type="Proteomes" id="UP000694720">
    <property type="component" value="Unplaced"/>
</dbReference>
<dbReference type="Proteomes" id="UP000694722">
    <property type="component" value="Unplaced"/>
</dbReference>
<dbReference type="Proteomes" id="UP000694723">
    <property type="component" value="Unplaced"/>
</dbReference>
<dbReference type="Proteomes" id="UP000694724">
    <property type="component" value="Unplaced"/>
</dbReference>
<dbReference type="Proteomes" id="UP000694725">
    <property type="component" value="Unplaced"/>
</dbReference>
<dbReference type="Proteomes" id="UP000694726">
    <property type="component" value="Unplaced"/>
</dbReference>
<dbReference type="Proteomes" id="UP000694727">
    <property type="component" value="Unplaced"/>
</dbReference>
<dbReference type="Proteomes" id="UP000694728">
    <property type="component" value="Unplaced"/>
</dbReference>
<dbReference type="GO" id="GO:0005615">
    <property type="term" value="C:extracellular space"/>
    <property type="evidence" value="ECO:0000250"/>
    <property type="project" value="UniProtKB"/>
</dbReference>
<dbReference type="GO" id="GO:0046659">
    <property type="term" value="F:digestive hormone activity"/>
    <property type="evidence" value="ECO:0000250"/>
    <property type="project" value="UniProtKB"/>
</dbReference>
<dbReference type="GO" id="GO:0001664">
    <property type="term" value="F:G protein-coupled receptor binding"/>
    <property type="evidence" value="ECO:0007669"/>
    <property type="project" value="Ensembl"/>
</dbReference>
<dbReference type="GO" id="GO:0005179">
    <property type="term" value="F:hormone activity"/>
    <property type="evidence" value="ECO:0000250"/>
    <property type="project" value="UniProtKB"/>
</dbReference>
<dbReference type="GO" id="GO:0007189">
    <property type="term" value="P:adenylate cyclase-activating G protein-coupled receptor signaling pathway"/>
    <property type="evidence" value="ECO:0000250"/>
    <property type="project" value="UniProtKB"/>
</dbReference>
<dbReference type="GO" id="GO:0002024">
    <property type="term" value="P:diet induced thermogenesis"/>
    <property type="evidence" value="ECO:0000250"/>
    <property type="project" value="UniProtKB"/>
</dbReference>
<dbReference type="GO" id="GO:0021766">
    <property type="term" value="P:hippocampus development"/>
    <property type="evidence" value="ECO:0000250"/>
    <property type="project" value="UniProtKB"/>
</dbReference>
<dbReference type="GO" id="GO:0009992">
    <property type="term" value="P:intracellular water homeostasis"/>
    <property type="evidence" value="ECO:0000250"/>
    <property type="project" value="UniProtKB"/>
</dbReference>
<dbReference type="GO" id="GO:0050996">
    <property type="term" value="P:positive regulation of lipid catabolic process"/>
    <property type="evidence" value="ECO:0000250"/>
    <property type="project" value="UniProtKB"/>
</dbReference>
<dbReference type="GO" id="GO:0032098">
    <property type="term" value="P:regulation of appetite"/>
    <property type="evidence" value="ECO:0000250"/>
    <property type="project" value="UniProtKB"/>
</dbReference>
<dbReference type="GO" id="GO:0048167">
    <property type="term" value="P:regulation of synaptic plasticity"/>
    <property type="evidence" value="ECO:0000250"/>
    <property type="project" value="UniProtKB"/>
</dbReference>
<dbReference type="GO" id="GO:0031667">
    <property type="term" value="P:response to nutrient levels"/>
    <property type="evidence" value="ECO:0000250"/>
    <property type="project" value="UniProtKB"/>
</dbReference>
<dbReference type="Gene3D" id="6.10.250.590">
    <property type="match status" value="1"/>
</dbReference>
<dbReference type="InterPro" id="IPR000532">
    <property type="entry name" value="Glucagon_GIP_secretin_VIP"/>
</dbReference>
<dbReference type="InterPro" id="IPR015675">
    <property type="entry name" value="Prosecretin"/>
</dbReference>
<dbReference type="PANTHER" id="PTHR17378">
    <property type="entry name" value="SECRETIN"/>
    <property type="match status" value="1"/>
</dbReference>
<dbReference type="PANTHER" id="PTHR17378:SF1">
    <property type="entry name" value="SECRETIN"/>
    <property type="match status" value="1"/>
</dbReference>
<dbReference type="Pfam" id="PF00123">
    <property type="entry name" value="Hormone_2"/>
    <property type="match status" value="1"/>
</dbReference>
<dbReference type="SMART" id="SM00070">
    <property type="entry name" value="GLUCA"/>
    <property type="match status" value="1"/>
</dbReference>
<dbReference type="PROSITE" id="PS00260">
    <property type="entry name" value="GLUCAGON"/>
    <property type="match status" value="1"/>
</dbReference>
<evidence type="ECO:0000250" key="1">
    <source>
        <dbReference type="UniProtKB" id="P09683"/>
    </source>
</evidence>
<evidence type="ECO:0000250" key="2">
    <source>
        <dbReference type="UniProtKB" id="P11384"/>
    </source>
</evidence>
<evidence type="ECO:0000250" key="3">
    <source>
        <dbReference type="UniProtKB" id="Q08535"/>
    </source>
</evidence>
<evidence type="ECO:0000255" key="4"/>
<evidence type="ECO:0000269" key="5">
    <source>
    </source>
</evidence>
<evidence type="ECO:0000269" key="6">
    <source>
    </source>
</evidence>
<evidence type="ECO:0000303" key="7">
    <source ref="1"/>
</evidence>
<evidence type="ECO:0000305" key="8"/>
<accession>P63298</accession>
<accession>A0A286ZRG5</accession>
<accession>P01279</accession>
<accession>Q9TR13</accession>
<protein>
    <recommendedName>
        <fullName evidence="7">Secretin</fullName>
    </recommendedName>
</protein>
<sequence>MATRALLLLLLLPPLLLLAGCAARPAPPRAPRHSDGTFTSELSRLRDSARLQRLLQGLVGKRSQQDPENNTAWTKSGEDRLCQLWSHMPALQAWMPMKPPVDQAWSPWLPPGLRAGALVSEPAIPAAEGSPMPP</sequence>
<name>SECR_PIG</name>
<feature type="signal peptide" evidence="4">
    <location>
        <begin position="1"/>
        <end position="21"/>
    </location>
</feature>
<feature type="propeptide" id="PRO_0000011429" evidence="5">
    <location>
        <begin position="22"/>
        <end position="31"/>
    </location>
</feature>
<feature type="peptide" id="PRO_0000011430" description="Secretin" evidence="5">
    <location>
        <begin position="33"/>
        <end position="59"/>
    </location>
</feature>
<feature type="propeptide" id="PRO_0000011431" evidence="5">
    <location>
        <begin position="63"/>
        <end position="134"/>
    </location>
</feature>
<feature type="modified residue" description="Valine amide" evidence="5">
    <location>
        <position position="59"/>
    </location>
</feature>
<feature type="modified residue" description="Phosphoserine" evidence="2">
    <location>
        <position position="63"/>
    </location>
</feature>
<comment type="function">
    <text evidence="2 3">Hormone involved in different processes, such as regulation of the pH of the duodenal content, food intake and water homeostasis. Exerts its biological effects by binding to secretin receptor (SCTR), a G-protein coupled receptor expressed in the basolateral domain of several cells. Acts as a key gastrointestinal hormone by regulating the pH of the duodenal content. Secreted by S cells of the duodenum in the crypts of Lieberkuehn and regulates the pH of the duodenum by (1) inhibiting the secretion of gastric acid from the parietal cells of the stomach and (2) stimulating the production of bicarbonate (NaHCO(3)) from the ductal cells of the pancreas (By similarity). Production of bicarbonate is essential to neutralize the pH and ensure no damage is done to the small intestine by the gastric acid. In addition to regulating the pH of the duodenal content, plays a central role in diet induced thermogenesis: acts as a non-sympathetic brown fat (BAT) activator mediating prandial thermogenesis, which consequentially induces satiation. Mechanistically, secretin released by the gut after a meal binds to secretin receptor (SCTR) in brown adipocytes, activating brown fat thermogenesis by stimulating lipolysis, which is sensed in the brain and promotes satiation. Also able to stimulate lipolysis in white adipocytes (By similarity). Also plays an important role in cellular osmoregulation: released into the systemic circulation in response to hyperosmolality and acts at different levels in the hypothalamus, pituitary and kidney to regulate water homeostasis (By similarity). Also plays a role in the central nervous system, possibly by acting as a neuropeptide hormone: required for hippocampal synaptic function and neural progenitor cells maintenance (By similarity).</text>
</comment>
<comment type="subcellular location">
    <subcellularLocation>
        <location evidence="6">Secreted</location>
    </subcellularLocation>
</comment>
<comment type="pharmaceutical">
    <text evidence="8">Available under the name Secretin-Ferring (Ferring Pharmaceuticals). Used for diagnostic use in pancreatic dysfunction.</text>
</comment>
<comment type="similarity">
    <text evidence="8">Belongs to the glucagon family.</text>
</comment>
<comment type="sequence caution" evidence="8">
    <conflict type="erroneous gene model prediction">
        <sequence resource="EMBL" id="AEMK02000006"/>
    </conflict>
</comment>
<keyword id="KW-0027">Amidation</keyword>
<keyword id="KW-0165">Cleavage on pair of basic residues</keyword>
<keyword id="KW-0903">Direct protein sequencing</keyword>
<keyword id="KW-0372">Hormone</keyword>
<keyword id="KW-0582">Pharmaceutical</keyword>
<keyword id="KW-0597">Phosphoprotein</keyword>
<keyword id="KW-1185">Reference proteome</keyword>
<keyword id="KW-0964">Secreted</keyword>
<keyword id="KW-0732">Signal</keyword>
<gene>
    <name evidence="1" type="primary">SCT</name>
</gene>
<organism>
    <name type="scientific">Sus scrofa</name>
    <name type="common">Pig</name>
    <dbReference type="NCBI Taxonomy" id="9823"/>
    <lineage>
        <taxon>Eukaryota</taxon>
        <taxon>Metazoa</taxon>
        <taxon>Chordata</taxon>
        <taxon>Craniata</taxon>
        <taxon>Vertebrata</taxon>
        <taxon>Euteleostomi</taxon>
        <taxon>Mammalia</taxon>
        <taxon>Eutheria</taxon>
        <taxon>Laurasiatheria</taxon>
        <taxon>Artiodactyla</taxon>
        <taxon>Suina</taxon>
        <taxon>Suidae</taxon>
        <taxon>Sus</taxon>
    </lineage>
</organism>